<keyword id="KW-0489">Methyltransferase</keyword>
<keyword id="KW-0949">S-adenosyl-L-methionine</keyword>
<keyword id="KW-0808">Transferase</keyword>
<accession>A0QLB4</accession>
<name>Y4573_MYCA1</name>
<comment type="function">
    <text evidence="1">Exhibits S-adenosyl-L-methionine-dependent methyltransferase activity.</text>
</comment>
<comment type="similarity">
    <text evidence="2">Belongs to the UPF0677 family.</text>
</comment>
<dbReference type="EC" id="2.1.1.-"/>
<dbReference type="EMBL" id="CP000479">
    <property type="protein sequence ID" value="ABK68210.1"/>
    <property type="molecule type" value="Genomic_DNA"/>
</dbReference>
<dbReference type="SMR" id="A0QLB4"/>
<dbReference type="KEGG" id="mav:MAV_4573"/>
<dbReference type="HOGENOM" id="CLU_056160_2_1_11"/>
<dbReference type="Proteomes" id="UP000001574">
    <property type="component" value="Chromosome"/>
</dbReference>
<dbReference type="GO" id="GO:0008168">
    <property type="term" value="F:methyltransferase activity"/>
    <property type="evidence" value="ECO:0007669"/>
    <property type="project" value="UniProtKB-KW"/>
</dbReference>
<dbReference type="GO" id="GO:0032259">
    <property type="term" value="P:methylation"/>
    <property type="evidence" value="ECO:0007669"/>
    <property type="project" value="UniProtKB-KW"/>
</dbReference>
<dbReference type="Gene3D" id="3.40.50.150">
    <property type="entry name" value="Vaccinia Virus protein VP39"/>
    <property type="match status" value="1"/>
</dbReference>
<dbReference type="InterPro" id="IPR007213">
    <property type="entry name" value="Ppm1/Ppm2/Tcmp"/>
</dbReference>
<dbReference type="InterPro" id="IPR029063">
    <property type="entry name" value="SAM-dependent_MTases_sf"/>
</dbReference>
<dbReference type="InterPro" id="IPR011610">
    <property type="entry name" value="SAM_mthyl_Trfase_ML2640-like"/>
</dbReference>
<dbReference type="NCBIfam" id="TIGR00027">
    <property type="entry name" value="mthyl_TIGR00027"/>
    <property type="match status" value="1"/>
</dbReference>
<dbReference type="PANTHER" id="PTHR43619">
    <property type="entry name" value="S-ADENOSYL-L-METHIONINE-DEPENDENT METHYLTRANSFERASE YKTD-RELATED"/>
    <property type="match status" value="1"/>
</dbReference>
<dbReference type="PANTHER" id="PTHR43619:SF2">
    <property type="entry name" value="S-ADENOSYL-L-METHIONINE-DEPENDENT METHYLTRANSFERASES SUPERFAMILY PROTEIN"/>
    <property type="match status" value="1"/>
</dbReference>
<dbReference type="Pfam" id="PF04072">
    <property type="entry name" value="LCM"/>
    <property type="match status" value="1"/>
</dbReference>
<dbReference type="SUPFAM" id="SSF53335">
    <property type="entry name" value="S-adenosyl-L-methionine-dependent methyltransferases"/>
    <property type="match status" value="1"/>
</dbReference>
<sequence length="313" mass="33386">MTVPNDDTWGPATSVGTTATMAAAARAIATRDGVINDPFAEPLVRAVGVNFLTRWAIGELVASDVDVEGSPWGLAQMPAAIAARTRYFDEFYADAAAAGIRQAVILASGLDTRAYRLDWPAGMTVFEIDQPAVVEFKTTALARLAAEPKADLRTVAVDLRDDWSTALATAGLDSSKPTAWIAEGLFGYLAPEAQDRLLDAVTALSTPGSRLGSEAVPDTADMDPHAARQRMRAATAKWRDHGFELDVDVISFAGERHDVGAYLQALGWTTVATPMAELLADQGLPAIARADDDRQTMNGVTYYTSTLGTGRQR</sequence>
<protein>
    <recommendedName>
        <fullName>Putative S-adenosyl-L-methionine-dependent methyltransferase MAV_4573</fullName>
        <ecNumber>2.1.1.-</ecNumber>
    </recommendedName>
</protein>
<feature type="chain" id="PRO_0000361113" description="Putative S-adenosyl-L-methionine-dependent methyltransferase MAV_4573">
    <location>
        <begin position="1"/>
        <end position="313"/>
    </location>
</feature>
<feature type="binding site" evidence="1">
    <location>
        <position position="129"/>
    </location>
    <ligand>
        <name>S-adenosyl-L-methionine</name>
        <dbReference type="ChEBI" id="CHEBI:59789"/>
    </ligand>
</feature>
<feature type="binding site" evidence="1">
    <location>
        <begin position="158"/>
        <end position="159"/>
    </location>
    <ligand>
        <name>S-adenosyl-L-methionine</name>
        <dbReference type="ChEBI" id="CHEBI:59789"/>
    </ligand>
</feature>
<evidence type="ECO:0000250" key="1"/>
<evidence type="ECO:0000305" key="2"/>
<organism>
    <name type="scientific">Mycobacterium avium (strain 104)</name>
    <dbReference type="NCBI Taxonomy" id="243243"/>
    <lineage>
        <taxon>Bacteria</taxon>
        <taxon>Bacillati</taxon>
        <taxon>Actinomycetota</taxon>
        <taxon>Actinomycetes</taxon>
        <taxon>Mycobacteriales</taxon>
        <taxon>Mycobacteriaceae</taxon>
        <taxon>Mycobacterium</taxon>
        <taxon>Mycobacterium avium complex (MAC)</taxon>
    </lineage>
</organism>
<proteinExistence type="inferred from homology"/>
<gene>
    <name type="ordered locus">MAV_4573</name>
</gene>
<reference key="1">
    <citation type="submission" date="2006-10" db="EMBL/GenBank/DDBJ databases">
        <authorList>
            <person name="Fleischmann R.D."/>
            <person name="Dodson R.J."/>
            <person name="Haft D.H."/>
            <person name="Merkel J.S."/>
            <person name="Nelson W.C."/>
            <person name="Fraser C.M."/>
        </authorList>
    </citation>
    <scope>NUCLEOTIDE SEQUENCE [LARGE SCALE GENOMIC DNA]</scope>
    <source>
        <strain>104</strain>
    </source>
</reference>